<accession>Q4WQ95</accession>
<gene>
    <name evidence="4" type="primary">erg7B</name>
    <name type="ORF">AFUA_4G12040</name>
</gene>
<keyword id="KW-0256">Endoplasmic reticulum</keyword>
<keyword id="KW-0413">Isomerase</keyword>
<keyword id="KW-0444">Lipid biosynthesis</keyword>
<keyword id="KW-0551">Lipid droplet</keyword>
<keyword id="KW-0443">Lipid metabolism</keyword>
<keyword id="KW-0472">Membrane</keyword>
<keyword id="KW-1185">Reference proteome</keyword>
<keyword id="KW-0677">Repeat</keyword>
<keyword id="KW-0752">Steroid biosynthesis</keyword>
<keyword id="KW-0753">Steroid metabolism</keyword>
<keyword id="KW-0756">Sterol biosynthesis</keyword>
<keyword id="KW-1207">Sterol metabolism</keyword>
<name>ERG7B_ASPFU</name>
<sequence>MNRLAKTDYSRWRMLDEDGKHTWHYLDDDEAARTWPQTLADKYYLGLPLDLPDLPTATSPLDSAINGLKFFSKLQLPPGNWGCEYGGPMFLLPGVVIAWVVTETPIPQAYAIEIKNYLMARANPVDGGWGLHSEGDSSVFGTSLNYTVLRLLGVDSEHPVMVQARGLLHRLGGALNAPHWSKFWLAVLGVCDWEVVNPVPPEAWLLPDWVPVAPWRWWVHIRQVFLPMSWIWSKRWTAAETDVVRALRRELFVQPWESIEWAAHRNDIAPTDNYHPKSWLLNSVNWILSNIWIPYLRPRSLATRAEDWVSKLIDMEDANSDYADLASVNGPLNMIVCYIRDGPDSYSVRRHRERMEEFLWVNKEGMLANGTNGVQCWDTAFLIQAVWSAGLAEDAQFKPMLVQALEFLDRQQIRENCQDQGVCYRHVRKGAWAFSNRDQGYGVSDCISEALKAVIVLQKEADGYPQLLEDQRIFDAVDTLLTYQNPSGGCASYEPTRGSEYLEMLNTAEVFGRIMVEYDYPECTSAVLTALVLFSKHWPDYRREEIQTFIQRGVDFIKRAQRPDGSWYGSWAVCFTYGTMFALECLRSAGETYENSEHVRRGCEFLLSKQREDGGWSESFQSCEQMTYIEHPTGSQVVQTAFAIIAVLSVDYPDVEPIHRGVRMIMSRQQRNGEWLQEGIEGIFNKSCAITYPNYKFIFPILALGKFGRKYPHLV</sequence>
<comment type="function">
    <text evidence="1 6 7">Lanosterol synthase; part of the third module of ergosterol biosynthesis pathway that includes the late steps of the pathway (By similarity). ERG7A and ERG7B catalyze the cyclization of (S)-2,3 oxidosqualene to lanosterol, a reaction that forms the sterol core (By similarity). The third module or late pathway involves the ergosterol synthesis itself through consecutive reactions that mainly occur in the endoplasmic reticulum (ER) membrane. Firstly, the squalene synthase erg9 catalyzes the condensation of 2 farnesyl pyrophosphate moieties to form squalene, which is the precursor of all steroids. Squalene synthase is crucial for balancing the incorporation of farnesyl diphosphate (FPP) into sterol and nonsterol isoprene synthesis. Secondly, squalene is converted into lanosterol by the consecutive action of the squalene epoxidase erg1 and the lanosterol synthase erg7. Then, the delta(24)-sterol C-methyltransferase erg6 methylates lanosterol at C-24 to produce eburicol. Eburicol is the substrate of the sterol 14-alpha demethylase encoded by cyp51A and cyp51B, to yield 4,4,24-trimethyl ergosta-8,14,24(28)-trienol. The C-14 reductase erg24 then reduces the C14=C15 double bond which leads to 4,4-dimethylfecosterol. A sequence of further demethylations at C-4, involving the C-4 demethylation complex containing the C-4 methylsterol oxidases erg25A or erg25B, the sterol-4-alpha-carboxylate 3-dehydrogenase erg26 and the 3-keto-steroid reductase erg27, leads to the production of fecosterol via 4-methylfecosterol. The C-8 sterol isomerase erg2 then catalyzes the reaction which results in unsaturation at C-7 in the B ring of sterols and thus converts fecosterol to episterol. The sterol-C5-desaturase erg3B then catalyzes the introduction of a C-5 double bond in the B ring to produce 5-dehydroepisterol. The 2 other sterol-C5-desaturases, erg3A and erg3C, seem to be less important in ergosterol biosynthesis. The C-22 sterol desaturase erg5 further converts 5-dehydroepisterol into ergosta-5,7,22,24(28)-tetraen-3beta-ol by forming the C-22(23) double bond in the sterol side chain. Finally, ergosta-5,7,22,24(28)-tetraen-3beta-ol is substrate of the C-24(28) sterol reductases erg4A and erg4B to produce ergosterol. Possible alternative sterol biosynthetic pathways might exist from fecosterol to ergosterol, depending on the activities of the erg3 isoforms (Probable) (PubMed:16110826, PubMed:18191972).</text>
</comment>
<comment type="catalytic activity">
    <reaction evidence="1">
        <text>(S)-2,3-epoxysqualene = lanosterol</text>
        <dbReference type="Rhea" id="RHEA:14621"/>
        <dbReference type="ChEBI" id="CHEBI:15441"/>
        <dbReference type="ChEBI" id="CHEBI:16521"/>
        <dbReference type="EC" id="5.4.99.7"/>
    </reaction>
    <physiologicalReaction direction="left-to-right" evidence="1">
        <dbReference type="Rhea" id="RHEA:14622"/>
    </physiologicalReaction>
</comment>
<comment type="pathway">
    <text evidence="6">Steroid metabolism; ergosterol biosynthesis.</text>
</comment>
<comment type="subcellular location">
    <subcellularLocation>
        <location evidence="1">Lipid droplet</location>
    </subcellularLocation>
    <subcellularLocation>
        <location evidence="1">Endoplasmic reticulum membrane</location>
        <topology evidence="1">Peripheral membrane protein</topology>
    </subcellularLocation>
</comment>
<comment type="miscellaneous">
    <text evidence="7">In Aspergillus, the biosynthesis pathway of the sterol precursors leading to the prevalent sterol ergosterol differs from yeast. The ring system of lanosterol in S.cerevisiae is firstly demethylised in three enzymatic steps leading to the intermediate zymosterol and secondly a methyl group is added to zymosterol by the sterol 24-C-methyltransferase to form fecosterol. In Aspergillus, lanosterol is firstly transmethylated by the sterol 24-C-methyltransferase leading to the intermediate eburicol and secondly demethylated in three steps to form fecosterol.</text>
</comment>
<comment type="similarity">
    <text evidence="5">Belongs to the terpene cyclase/mutase family.</text>
</comment>
<reference key="1">
    <citation type="journal article" date="2005" name="Nature">
        <title>Genomic sequence of the pathogenic and allergenic filamentous fungus Aspergillus fumigatus.</title>
        <authorList>
            <person name="Nierman W.C."/>
            <person name="Pain A."/>
            <person name="Anderson M.J."/>
            <person name="Wortman J.R."/>
            <person name="Kim H.S."/>
            <person name="Arroyo J."/>
            <person name="Berriman M."/>
            <person name="Abe K."/>
            <person name="Archer D.B."/>
            <person name="Bermejo C."/>
            <person name="Bennett J.W."/>
            <person name="Bowyer P."/>
            <person name="Chen D."/>
            <person name="Collins M."/>
            <person name="Coulsen R."/>
            <person name="Davies R."/>
            <person name="Dyer P.S."/>
            <person name="Farman M.L."/>
            <person name="Fedorova N."/>
            <person name="Fedorova N.D."/>
            <person name="Feldblyum T.V."/>
            <person name="Fischer R."/>
            <person name="Fosker N."/>
            <person name="Fraser A."/>
            <person name="Garcia J.L."/>
            <person name="Garcia M.J."/>
            <person name="Goble A."/>
            <person name="Goldman G.H."/>
            <person name="Gomi K."/>
            <person name="Griffith-Jones S."/>
            <person name="Gwilliam R."/>
            <person name="Haas B.J."/>
            <person name="Haas H."/>
            <person name="Harris D.E."/>
            <person name="Horiuchi H."/>
            <person name="Huang J."/>
            <person name="Humphray S."/>
            <person name="Jimenez J."/>
            <person name="Keller N."/>
            <person name="Khouri H."/>
            <person name="Kitamoto K."/>
            <person name="Kobayashi T."/>
            <person name="Konzack S."/>
            <person name="Kulkarni R."/>
            <person name="Kumagai T."/>
            <person name="Lafton A."/>
            <person name="Latge J.-P."/>
            <person name="Li W."/>
            <person name="Lord A."/>
            <person name="Lu C."/>
            <person name="Majoros W.H."/>
            <person name="May G.S."/>
            <person name="Miller B.L."/>
            <person name="Mohamoud Y."/>
            <person name="Molina M."/>
            <person name="Monod M."/>
            <person name="Mouyna I."/>
            <person name="Mulligan S."/>
            <person name="Murphy L.D."/>
            <person name="O'Neil S."/>
            <person name="Paulsen I."/>
            <person name="Penalva M.A."/>
            <person name="Pertea M."/>
            <person name="Price C."/>
            <person name="Pritchard B.L."/>
            <person name="Quail M.A."/>
            <person name="Rabbinowitsch E."/>
            <person name="Rawlins N."/>
            <person name="Rajandream M.A."/>
            <person name="Reichard U."/>
            <person name="Renauld H."/>
            <person name="Robson G.D."/>
            <person name="Rodriguez de Cordoba S."/>
            <person name="Rodriguez-Pena J.M."/>
            <person name="Ronning C.M."/>
            <person name="Rutter S."/>
            <person name="Salzberg S.L."/>
            <person name="Sanchez M."/>
            <person name="Sanchez-Ferrero J.C."/>
            <person name="Saunders D."/>
            <person name="Seeger K."/>
            <person name="Squares R."/>
            <person name="Squares S."/>
            <person name="Takeuchi M."/>
            <person name="Tekaia F."/>
            <person name="Turner G."/>
            <person name="Vazquez de Aldana C.R."/>
            <person name="Weidman J."/>
            <person name="White O."/>
            <person name="Woodward J.R."/>
            <person name="Yu J.-H."/>
            <person name="Fraser C.M."/>
            <person name="Galagan J.E."/>
            <person name="Asai K."/>
            <person name="Machida M."/>
            <person name="Hall N."/>
            <person name="Barrell B.G."/>
            <person name="Denning D.W."/>
        </authorList>
    </citation>
    <scope>NUCLEOTIDE SEQUENCE [LARGE SCALE GENOMIC DNA]</scope>
    <source>
        <strain>ATCC MYA-4609 / CBS 101355 / FGSC A1100 / Af293</strain>
    </source>
</reference>
<reference key="2">
    <citation type="journal article" date="2005" name="Med. Mycol.">
        <title>The ergosterol biosynthesis pathway, transporter genes, and azole resistance in Aspergillus fumigatus.</title>
        <authorList>
            <person name="Ferreira M.E."/>
            <person name="Colombo A.L."/>
            <person name="Paulsen I."/>
            <person name="Ren Q."/>
            <person name="Wortman J."/>
            <person name="Huang J."/>
            <person name="Goldman M.H."/>
            <person name="Goldman G.H."/>
        </authorList>
    </citation>
    <scope>IDENTIFICATION</scope>
    <scope>FUNCTION</scope>
    <scope>PATHWAY</scope>
</reference>
<reference key="3">
    <citation type="journal article" date="2008" name="Steroids">
        <title>Ergosterol biosynthesis pathway in Aspergillus fumigatus.</title>
        <authorList>
            <person name="Alcazar-Fuoli L."/>
            <person name="Mellado E."/>
            <person name="Garcia-Effron G."/>
            <person name="Lopez J.F."/>
            <person name="Grimalt J.O."/>
            <person name="Cuenca-Estrella J.M."/>
            <person name="Rodriguez-Tudela J.L."/>
        </authorList>
    </citation>
    <scope>FUNCTION</scope>
</reference>
<organism>
    <name type="scientific">Aspergillus fumigatus (strain ATCC MYA-4609 / CBS 101355 / FGSC A1100 / Af293)</name>
    <name type="common">Neosartorya fumigata</name>
    <dbReference type="NCBI Taxonomy" id="330879"/>
    <lineage>
        <taxon>Eukaryota</taxon>
        <taxon>Fungi</taxon>
        <taxon>Dikarya</taxon>
        <taxon>Ascomycota</taxon>
        <taxon>Pezizomycotina</taxon>
        <taxon>Eurotiomycetes</taxon>
        <taxon>Eurotiomycetidae</taxon>
        <taxon>Eurotiales</taxon>
        <taxon>Aspergillaceae</taxon>
        <taxon>Aspergillus</taxon>
        <taxon>Aspergillus subgen. Fumigati</taxon>
    </lineage>
</organism>
<dbReference type="EC" id="5.4.99.7" evidence="1"/>
<dbReference type="EMBL" id="AAHF01000005">
    <property type="protein sequence ID" value="EAL89589.1"/>
    <property type="molecule type" value="Genomic_DNA"/>
</dbReference>
<dbReference type="RefSeq" id="XP_751627.1">
    <property type="nucleotide sequence ID" value="XM_746534.1"/>
</dbReference>
<dbReference type="SMR" id="Q4WQ95"/>
<dbReference type="FunCoup" id="Q4WQ95">
    <property type="interactions" value="130"/>
</dbReference>
<dbReference type="STRING" id="330879.Q4WQ95"/>
<dbReference type="EnsemblFungi" id="EAL89589">
    <property type="protein sequence ID" value="EAL89589"/>
    <property type="gene ID" value="AFUA_4G12040"/>
</dbReference>
<dbReference type="GeneID" id="3509080"/>
<dbReference type="KEGG" id="afm:AFUA_4G12040"/>
<dbReference type="VEuPathDB" id="FungiDB:Afu4g12040"/>
<dbReference type="eggNOG" id="KOG0497">
    <property type="taxonomic scope" value="Eukaryota"/>
</dbReference>
<dbReference type="HOGENOM" id="CLU_009074_2_1_1"/>
<dbReference type="InParanoid" id="Q4WQ95"/>
<dbReference type="OMA" id="WVHIRQV"/>
<dbReference type="OrthoDB" id="21502at2759"/>
<dbReference type="UniPathway" id="UPA00768"/>
<dbReference type="Proteomes" id="UP000002530">
    <property type="component" value="Chromosome 4"/>
</dbReference>
<dbReference type="GO" id="GO:0005789">
    <property type="term" value="C:endoplasmic reticulum membrane"/>
    <property type="evidence" value="ECO:0007669"/>
    <property type="project" value="UniProtKB-SubCell"/>
</dbReference>
<dbReference type="GO" id="GO:0005811">
    <property type="term" value="C:lipid droplet"/>
    <property type="evidence" value="ECO:0000318"/>
    <property type="project" value="GO_Central"/>
</dbReference>
<dbReference type="GO" id="GO:0000250">
    <property type="term" value="F:lanosterol synthase activity"/>
    <property type="evidence" value="ECO:0000318"/>
    <property type="project" value="GO_Central"/>
</dbReference>
<dbReference type="GO" id="GO:0006696">
    <property type="term" value="P:ergosterol biosynthetic process"/>
    <property type="evidence" value="ECO:0000318"/>
    <property type="project" value="GO_Central"/>
</dbReference>
<dbReference type="GO" id="GO:0016104">
    <property type="term" value="P:triterpenoid biosynthetic process"/>
    <property type="evidence" value="ECO:0007669"/>
    <property type="project" value="InterPro"/>
</dbReference>
<dbReference type="CDD" id="cd02892">
    <property type="entry name" value="SQCY_1"/>
    <property type="match status" value="1"/>
</dbReference>
<dbReference type="FunFam" id="1.50.10.20:FF:000003">
    <property type="entry name" value="Terpene cyclase/mutase family member"/>
    <property type="match status" value="1"/>
</dbReference>
<dbReference type="Gene3D" id="1.50.10.20">
    <property type="match status" value="2"/>
</dbReference>
<dbReference type="Gene3D" id="6.20.120.20">
    <property type="match status" value="1"/>
</dbReference>
<dbReference type="InterPro" id="IPR032696">
    <property type="entry name" value="SQ_cyclase_C"/>
</dbReference>
<dbReference type="InterPro" id="IPR032697">
    <property type="entry name" value="SQ_cyclase_N"/>
</dbReference>
<dbReference type="InterPro" id="IPR018333">
    <property type="entry name" value="Squalene_cyclase"/>
</dbReference>
<dbReference type="InterPro" id="IPR002365">
    <property type="entry name" value="Terpene_synthase_CS"/>
</dbReference>
<dbReference type="InterPro" id="IPR008930">
    <property type="entry name" value="Terpenoid_cyclase/PrenylTrfase"/>
</dbReference>
<dbReference type="NCBIfam" id="TIGR01787">
    <property type="entry name" value="squalene_cyclas"/>
    <property type="match status" value="1"/>
</dbReference>
<dbReference type="PANTHER" id="PTHR11764:SF20">
    <property type="entry name" value="LANOSTEROL SYNTHASE"/>
    <property type="match status" value="1"/>
</dbReference>
<dbReference type="PANTHER" id="PTHR11764">
    <property type="entry name" value="TERPENE CYCLASE/MUTASE FAMILY MEMBER"/>
    <property type="match status" value="1"/>
</dbReference>
<dbReference type="Pfam" id="PF13243">
    <property type="entry name" value="SQHop_cyclase_C"/>
    <property type="match status" value="1"/>
</dbReference>
<dbReference type="Pfam" id="PF13249">
    <property type="entry name" value="SQHop_cyclase_N"/>
    <property type="match status" value="1"/>
</dbReference>
<dbReference type="SFLD" id="SFLDG01016">
    <property type="entry name" value="Prenyltransferase_Like_2"/>
    <property type="match status" value="1"/>
</dbReference>
<dbReference type="SUPFAM" id="SSF48239">
    <property type="entry name" value="Terpenoid cyclases/Protein prenyltransferases"/>
    <property type="match status" value="2"/>
</dbReference>
<dbReference type="PROSITE" id="PS01074">
    <property type="entry name" value="TERPENE_SYNTHASES"/>
    <property type="match status" value="1"/>
</dbReference>
<evidence type="ECO:0000250" key="1">
    <source>
        <dbReference type="UniProtKB" id="P38604"/>
    </source>
</evidence>
<evidence type="ECO:0000250" key="2">
    <source>
        <dbReference type="UniProtKB" id="P48449"/>
    </source>
</evidence>
<evidence type="ECO:0000255" key="3"/>
<evidence type="ECO:0000303" key="4">
    <source>
    </source>
</evidence>
<evidence type="ECO:0000305" key="5"/>
<evidence type="ECO:0000305" key="6">
    <source>
    </source>
</evidence>
<evidence type="ECO:0000305" key="7">
    <source>
    </source>
</evidence>
<feature type="chain" id="PRO_0000454119" description="Lanosterol synthase erg7B">
    <location>
        <begin position="1"/>
        <end position="715"/>
    </location>
</feature>
<feature type="repeat" description="PFTB 1" evidence="3">
    <location>
        <begin position="111"/>
        <end position="153"/>
    </location>
</feature>
<feature type="repeat" description="PFTB 2" evidence="3">
    <location>
        <begin position="550"/>
        <end position="590"/>
    </location>
</feature>
<feature type="repeat" description="PFTB 3" evidence="3">
    <location>
        <begin position="599"/>
        <end position="640"/>
    </location>
</feature>
<feature type="active site" description="Proton donor" evidence="2">
    <location>
        <position position="445"/>
    </location>
</feature>
<proteinExistence type="inferred from homology"/>
<protein>
    <recommendedName>
        <fullName evidence="4">Lanosterol synthase erg7B</fullName>
        <ecNumber evidence="1">5.4.99.7</ecNumber>
    </recommendedName>
    <alternativeName>
        <fullName evidence="1">2,3-epoxysqualene--lanosterol cyclase erg7B</fullName>
    </alternativeName>
    <alternativeName>
        <fullName evidence="4">Ergosterol biosynthesis protein 7B</fullName>
    </alternativeName>
    <alternativeName>
        <fullName evidence="1">Oxidosqualene--lanosterol cyclase erg7B</fullName>
        <shortName evidence="1">OSC</shortName>
    </alternativeName>
</protein>